<organism>
    <name type="scientific">Streptococcus pyogenes serotype M12 (strain MGAS9429)</name>
    <dbReference type="NCBI Taxonomy" id="370551"/>
    <lineage>
        <taxon>Bacteria</taxon>
        <taxon>Bacillati</taxon>
        <taxon>Bacillota</taxon>
        <taxon>Bacilli</taxon>
        <taxon>Lactobacillales</taxon>
        <taxon>Streptococcaceae</taxon>
        <taxon>Streptococcus</taxon>
    </lineage>
</organism>
<dbReference type="EMBL" id="CP000259">
    <property type="protein sequence ID" value="ABF31599.1"/>
    <property type="molecule type" value="Genomic_DNA"/>
</dbReference>
<dbReference type="SMR" id="Q1JN00"/>
<dbReference type="KEGG" id="spk:MGAS9429_Spy0411"/>
<dbReference type="HOGENOM" id="CLU_190949_0_2_9"/>
<dbReference type="Proteomes" id="UP000002433">
    <property type="component" value="Chromosome"/>
</dbReference>
<dbReference type="GO" id="GO:0005737">
    <property type="term" value="C:cytoplasm"/>
    <property type="evidence" value="ECO:0007669"/>
    <property type="project" value="UniProtKB-ARBA"/>
</dbReference>
<dbReference type="GO" id="GO:1990904">
    <property type="term" value="C:ribonucleoprotein complex"/>
    <property type="evidence" value="ECO:0007669"/>
    <property type="project" value="UniProtKB-KW"/>
</dbReference>
<dbReference type="GO" id="GO:0005840">
    <property type="term" value="C:ribosome"/>
    <property type="evidence" value="ECO:0007669"/>
    <property type="project" value="UniProtKB-KW"/>
</dbReference>
<dbReference type="GO" id="GO:0003735">
    <property type="term" value="F:structural constituent of ribosome"/>
    <property type="evidence" value="ECO:0007669"/>
    <property type="project" value="InterPro"/>
</dbReference>
<dbReference type="GO" id="GO:0006412">
    <property type="term" value="P:translation"/>
    <property type="evidence" value="ECO:0007669"/>
    <property type="project" value="UniProtKB-UniRule"/>
</dbReference>
<dbReference type="Gene3D" id="2.20.28.120">
    <property type="entry name" value="Ribosomal protein L33"/>
    <property type="match status" value="1"/>
</dbReference>
<dbReference type="HAMAP" id="MF_00294">
    <property type="entry name" value="Ribosomal_bL33"/>
    <property type="match status" value="1"/>
</dbReference>
<dbReference type="InterPro" id="IPR001705">
    <property type="entry name" value="Ribosomal_bL33"/>
</dbReference>
<dbReference type="InterPro" id="IPR038584">
    <property type="entry name" value="Ribosomal_bL33_sf"/>
</dbReference>
<dbReference type="InterPro" id="IPR011332">
    <property type="entry name" value="Ribosomal_zn-bd"/>
</dbReference>
<dbReference type="NCBIfam" id="NF001764">
    <property type="entry name" value="PRK00504.1"/>
    <property type="match status" value="1"/>
</dbReference>
<dbReference type="NCBIfam" id="NF001860">
    <property type="entry name" value="PRK00595.1"/>
    <property type="match status" value="1"/>
</dbReference>
<dbReference type="NCBIfam" id="TIGR01023">
    <property type="entry name" value="rpmG_bact"/>
    <property type="match status" value="1"/>
</dbReference>
<dbReference type="PANTHER" id="PTHR43168">
    <property type="entry name" value="50S RIBOSOMAL PROTEIN L33, CHLOROPLASTIC"/>
    <property type="match status" value="1"/>
</dbReference>
<dbReference type="PANTHER" id="PTHR43168:SF6">
    <property type="entry name" value="LARGE RIBOSOMAL SUBUNIT PROTEIN BL33A"/>
    <property type="match status" value="1"/>
</dbReference>
<dbReference type="Pfam" id="PF00471">
    <property type="entry name" value="Ribosomal_L33"/>
    <property type="match status" value="1"/>
</dbReference>
<dbReference type="SUPFAM" id="SSF57829">
    <property type="entry name" value="Zn-binding ribosomal proteins"/>
    <property type="match status" value="1"/>
</dbReference>
<proteinExistence type="inferred from homology"/>
<feature type="chain" id="PRO_0000356721" description="Large ribosomal subunit protein bL33A">
    <location>
        <begin position="1"/>
        <end position="48"/>
    </location>
</feature>
<sequence>MRVKINLECSECGSNNYLTSKNKSSHPEKIKVPKYCPKERKVTLHVET</sequence>
<protein>
    <recommendedName>
        <fullName evidence="1">Large ribosomal subunit protein bL33A</fullName>
    </recommendedName>
    <alternativeName>
        <fullName evidence="1">50S ribosomal protein L33 1</fullName>
    </alternativeName>
</protein>
<accession>Q1JN00</accession>
<reference key="1">
    <citation type="journal article" date="2006" name="Proc. Natl. Acad. Sci. U.S.A.">
        <title>Molecular genetic anatomy of inter- and intraserotype variation in the human bacterial pathogen group A Streptococcus.</title>
        <authorList>
            <person name="Beres S.B."/>
            <person name="Richter E.W."/>
            <person name="Nagiec M.J."/>
            <person name="Sumby P."/>
            <person name="Porcella S.F."/>
            <person name="DeLeo F.R."/>
            <person name="Musser J.M."/>
        </authorList>
    </citation>
    <scope>NUCLEOTIDE SEQUENCE [LARGE SCALE GENOMIC DNA]</scope>
    <source>
        <strain>MGAS9429</strain>
    </source>
</reference>
<evidence type="ECO:0000255" key="1">
    <source>
        <dbReference type="HAMAP-Rule" id="MF_00294"/>
    </source>
</evidence>
<gene>
    <name evidence="1" type="primary">rpmG1</name>
    <name type="ordered locus">MGAS9429_Spy0411</name>
</gene>
<comment type="similarity">
    <text evidence="1">Belongs to the bacterial ribosomal protein bL33 family.</text>
</comment>
<name>RL331_STRPC</name>
<keyword id="KW-0687">Ribonucleoprotein</keyword>
<keyword id="KW-0689">Ribosomal protein</keyword>